<keyword id="KW-0002">3D-structure</keyword>
<keyword id="KW-0012">Acyltransferase</keyword>
<keyword id="KW-0046">Antibiotic resistance</keyword>
<keyword id="KW-1185">Reference proteome</keyword>
<keyword id="KW-0808">Transferase</keyword>
<comment type="function">
    <text evidence="3">Catalyzes the coenzyme A-dependent acetylation of the 2' hydroxyl or amino group of a broad spectrum of aminoglycosides. It confers resistance to aminoglycosides.</text>
</comment>
<comment type="subunit">
    <text evidence="4">Homodimer.</text>
</comment>
<comment type="similarity">
    <text evidence="4">Belongs to the AAC(2')-I acetyltransferase family.</text>
</comment>
<reference key="1">
    <citation type="journal article" date="1997" name="Mol. Microbiol.">
        <title>Aminoglycoside 2'-N-acetyltransferase genes are universally present in mycobacteria: characterization of the aac(2')-Ic gene from Mycobacterium tuberculosis and the aac(2')-Id gene from Mycobacterium smegmatis.</title>
        <authorList>
            <person name="Ainsa J.A."/>
            <person name="Perez E."/>
            <person name="Pelicic V."/>
            <person name="Berthet F.-X."/>
            <person name="Gicquel B."/>
            <person name="Martin C."/>
        </authorList>
    </citation>
    <scope>NUCLEOTIDE SEQUENCE [GENOMIC DNA]</scope>
    <scope>FUNCTION</scope>
    <scope>CATALYTIC ACTIVITY</scope>
</reference>
<reference key="2">
    <citation type="submission" date="2006-10" db="EMBL/GenBank/DDBJ databases">
        <authorList>
            <person name="Fleischmann R.D."/>
            <person name="Dodson R.J."/>
            <person name="Haft D.H."/>
            <person name="Merkel J.S."/>
            <person name="Nelson W.C."/>
            <person name="Fraser C.M."/>
        </authorList>
    </citation>
    <scope>NUCLEOTIDE SEQUENCE [LARGE SCALE GENOMIC DNA]</scope>
    <source>
        <strain>ATCC 700084 / mc(2)155</strain>
    </source>
</reference>
<reference key="3">
    <citation type="journal article" date="2007" name="Genome Biol.">
        <title>Interrupted coding sequences in Mycobacterium smegmatis: authentic mutations or sequencing errors?</title>
        <authorList>
            <person name="Deshayes C."/>
            <person name="Perrodou E."/>
            <person name="Gallien S."/>
            <person name="Euphrasie D."/>
            <person name="Schaeffer C."/>
            <person name="Van-Dorsselaer A."/>
            <person name="Poch O."/>
            <person name="Lecompte O."/>
            <person name="Reyrat J.-M."/>
        </authorList>
    </citation>
    <scope>NUCLEOTIDE SEQUENCE [LARGE SCALE GENOMIC DNA]</scope>
    <source>
        <strain>ATCC 700084 / mc(2)155</strain>
    </source>
</reference>
<reference key="4">
    <citation type="journal article" date="2009" name="Genome Res.">
        <title>Ortho-proteogenomics: multiple proteomes investigation through orthology and a new MS-based protocol.</title>
        <authorList>
            <person name="Gallien S."/>
            <person name="Perrodou E."/>
            <person name="Carapito C."/>
            <person name="Deshayes C."/>
            <person name="Reyrat J.-M."/>
            <person name="Van Dorsselaer A."/>
            <person name="Poch O."/>
            <person name="Schaeffer C."/>
            <person name="Lecompte O."/>
        </authorList>
    </citation>
    <scope>NUCLEOTIDE SEQUENCE [LARGE SCALE GENOMIC DNA]</scope>
    <source>
        <strain>ATCC 700084 / mc(2)155</strain>
    </source>
</reference>
<sequence length="210" mass="23168">MLTQHVSEARTRGAIHTARLIHTSDLDQETRDGARRMVIEAFRDPSGDSDFTDDFTDDDWDHALGGMHALISHHGALIAHGAVVQRRLMYRGPDGRGHALRCGYVEAVAVREDRRGDGLGTAVLDALEQVIRGAYQIGALSASDIARPMYIARGWLSWEGPTSVLTPTEGIVRTPEDDRSLFVLPVDLPDGLELDTAREITCDWRSGDPW</sequence>
<name>AAC2_MYCS2</name>
<organism>
    <name type="scientific">Mycolicibacterium smegmatis (strain ATCC 700084 / mc(2)155)</name>
    <name type="common">Mycobacterium smegmatis</name>
    <dbReference type="NCBI Taxonomy" id="246196"/>
    <lineage>
        <taxon>Bacteria</taxon>
        <taxon>Bacillati</taxon>
        <taxon>Actinomycetota</taxon>
        <taxon>Actinomycetes</taxon>
        <taxon>Mycobacteriales</taxon>
        <taxon>Mycobacteriaceae</taxon>
        <taxon>Mycolicibacterium</taxon>
    </lineage>
</organism>
<gene>
    <name type="primary">aac</name>
    <name type="ordered locus">MSMEG_0434</name>
    <name type="ordered locus">MSMEI_0423</name>
</gene>
<accession>P94968</accession>
<accession>A0QPK9</accession>
<accession>I7G383</accession>
<evidence type="ECO:0000250" key="1">
    <source>
        <dbReference type="UniProtKB" id="P9WQG9"/>
    </source>
</evidence>
<evidence type="ECO:0000255" key="2">
    <source>
        <dbReference type="PROSITE-ProRule" id="PRU00532"/>
    </source>
</evidence>
<evidence type="ECO:0000269" key="3">
    <source>
    </source>
</evidence>
<evidence type="ECO:0000305" key="4"/>
<evidence type="ECO:0007829" key="5">
    <source>
        <dbReference type="PDB" id="7CSI"/>
    </source>
</evidence>
<dbReference type="EC" id="2.3.1.-" evidence="3"/>
<dbReference type="EMBL" id="U72743">
    <property type="protein sequence ID" value="AAB41701.1"/>
    <property type="molecule type" value="Genomic_DNA"/>
</dbReference>
<dbReference type="EMBL" id="CP000480">
    <property type="protein sequence ID" value="ABK70574.1"/>
    <property type="molecule type" value="Genomic_DNA"/>
</dbReference>
<dbReference type="EMBL" id="CP001663">
    <property type="protein sequence ID" value="AFP36904.1"/>
    <property type="molecule type" value="Genomic_DNA"/>
</dbReference>
<dbReference type="RefSeq" id="YP_884847.1">
    <property type="nucleotide sequence ID" value="NC_008596.1"/>
</dbReference>
<dbReference type="PDB" id="7CRM">
    <property type="method" value="X-ray"/>
    <property type="resolution" value="2.49 A"/>
    <property type="chains" value="A/B/C/D=1-210"/>
</dbReference>
<dbReference type="PDB" id="7CS0">
    <property type="method" value="X-ray"/>
    <property type="resolution" value="2.05 A"/>
    <property type="chains" value="A/B=1-210"/>
</dbReference>
<dbReference type="PDB" id="7CS1">
    <property type="method" value="X-ray"/>
    <property type="resolution" value="1.97 A"/>
    <property type="chains" value="A/B=1-210"/>
</dbReference>
<dbReference type="PDB" id="7CSI">
    <property type="method" value="X-ray"/>
    <property type="resolution" value="1.89 A"/>
    <property type="chains" value="A/B=1-210"/>
</dbReference>
<dbReference type="PDB" id="7CSJ">
    <property type="method" value="X-ray"/>
    <property type="resolution" value="2.17 A"/>
    <property type="chains" value="A/B=1-210"/>
</dbReference>
<dbReference type="PDBsum" id="7CRM"/>
<dbReference type="PDBsum" id="7CS0"/>
<dbReference type="PDBsum" id="7CS1"/>
<dbReference type="PDBsum" id="7CSI"/>
<dbReference type="PDBsum" id="7CSJ"/>
<dbReference type="SMR" id="P94968"/>
<dbReference type="STRING" id="246196.MSMEG_0434"/>
<dbReference type="CARD" id="ARO:3002526">
    <property type="molecule name" value="AAC(2')-Id"/>
    <property type="mechanism identifier" value="ARO:0001004"/>
    <property type="mechanism name" value="antibiotic inactivation"/>
</dbReference>
<dbReference type="PaxDb" id="246196-MSMEI_0423"/>
<dbReference type="KEGG" id="ag:AAB41701"/>
<dbReference type="KEGG" id="msb:LJ00_02155"/>
<dbReference type="KEGG" id="msg:MSMEI_0423"/>
<dbReference type="KEGG" id="msm:MSMEG_0434"/>
<dbReference type="PATRIC" id="fig|246196.19.peg.430"/>
<dbReference type="eggNOG" id="COG0456">
    <property type="taxonomic scope" value="Bacteria"/>
</dbReference>
<dbReference type="OrthoDB" id="70281at2"/>
<dbReference type="Proteomes" id="UP000000757">
    <property type="component" value="Chromosome"/>
</dbReference>
<dbReference type="Proteomes" id="UP000006158">
    <property type="component" value="Chromosome"/>
</dbReference>
<dbReference type="GO" id="GO:0016747">
    <property type="term" value="F:acyltransferase activity, transferring groups other than amino-acyl groups"/>
    <property type="evidence" value="ECO:0007669"/>
    <property type="project" value="InterPro"/>
</dbReference>
<dbReference type="GO" id="GO:0046677">
    <property type="term" value="P:response to antibiotic"/>
    <property type="evidence" value="ECO:0007669"/>
    <property type="project" value="UniProtKB-KW"/>
</dbReference>
<dbReference type="Gene3D" id="3.40.630.30">
    <property type="match status" value="1"/>
</dbReference>
<dbReference type="InterPro" id="IPR016181">
    <property type="entry name" value="Acyl_CoA_acyltransferase"/>
</dbReference>
<dbReference type="InterPro" id="IPR000182">
    <property type="entry name" value="GNAT_dom"/>
</dbReference>
<dbReference type="NCBIfam" id="NF000042">
    <property type="entry name" value="AAC_2p_Id"/>
    <property type="match status" value="1"/>
</dbReference>
<dbReference type="Pfam" id="PF00583">
    <property type="entry name" value="Acetyltransf_1"/>
    <property type="match status" value="1"/>
</dbReference>
<dbReference type="SUPFAM" id="SSF55729">
    <property type="entry name" value="Acyl-CoA N-acyltransferases (Nat)"/>
    <property type="match status" value="1"/>
</dbReference>
<dbReference type="PROSITE" id="PS51186">
    <property type="entry name" value="GNAT"/>
    <property type="match status" value="1"/>
</dbReference>
<proteinExistence type="evidence at protein level"/>
<protein>
    <recommendedName>
        <fullName>Aminoglycoside 2'-N-acetyltransferase</fullName>
        <ecNumber evidence="3">2.3.1.-</ecNumber>
    </recommendedName>
    <alternativeName>
        <fullName>AAC(2')-Id</fullName>
    </alternativeName>
</protein>
<feature type="chain" id="PRO_0000064411" description="Aminoglycoside 2'-N-acetyltransferase">
    <location>
        <begin position="1"/>
        <end position="210"/>
    </location>
</feature>
<feature type="domain" description="N-acetyltransferase" evidence="2">
    <location>
        <begin position="21"/>
        <end position="189"/>
    </location>
</feature>
<feature type="binding site" evidence="1">
    <location>
        <position position="54"/>
    </location>
    <ligand>
        <name>substrate</name>
    </ligand>
</feature>
<feature type="binding site" evidence="1">
    <location>
        <begin position="106"/>
        <end position="107"/>
    </location>
    <ligand>
        <name>substrate</name>
    </ligand>
</feature>
<feature type="binding site" evidence="1">
    <location>
        <begin position="108"/>
        <end position="110"/>
    </location>
    <ligand>
        <name>CoA</name>
        <dbReference type="ChEBI" id="CHEBI:57287"/>
    </ligand>
</feature>
<feature type="binding site" evidence="1">
    <location>
        <begin position="115"/>
        <end position="120"/>
    </location>
    <ligand>
        <name>CoA</name>
        <dbReference type="ChEBI" id="CHEBI:57287"/>
    </ligand>
</feature>
<feature type="binding site" evidence="1">
    <location>
        <position position="141"/>
    </location>
    <ligand>
        <name>substrate</name>
    </ligand>
</feature>
<feature type="binding site" evidence="1">
    <location>
        <begin position="176"/>
        <end position="177"/>
    </location>
    <ligand>
        <name>substrate</name>
    </ligand>
</feature>
<feature type="strand" evidence="5">
    <location>
        <begin position="19"/>
        <end position="22"/>
    </location>
</feature>
<feature type="helix" evidence="5">
    <location>
        <begin position="23"/>
        <end position="25"/>
    </location>
</feature>
<feature type="helix" evidence="5">
    <location>
        <begin position="28"/>
        <end position="41"/>
    </location>
</feature>
<feature type="helix" evidence="5">
    <location>
        <begin position="57"/>
        <end position="61"/>
    </location>
</feature>
<feature type="strand" evidence="5">
    <location>
        <begin position="65"/>
        <end position="73"/>
    </location>
</feature>
<feature type="strand" evidence="5">
    <location>
        <begin position="76"/>
        <end position="91"/>
    </location>
</feature>
<feature type="strand" evidence="5">
    <location>
        <begin position="97"/>
        <end position="110"/>
    </location>
</feature>
<feature type="helix" evidence="5">
    <location>
        <begin position="112"/>
        <end position="114"/>
    </location>
</feature>
<feature type="helix" evidence="5">
    <location>
        <begin position="119"/>
        <end position="134"/>
    </location>
</feature>
<feature type="strand" evidence="5">
    <location>
        <begin position="136"/>
        <end position="141"/>
    </location>
</feature>
<feature type="helix" evidence="5">
    <location>
        <begin position="144"/>
        <end position="146"/>
    </location>
</feature>
<feature type="helix" evidence="5">
    <location>
        <begin position="147"/>
        <end position="152"/>
    </location>
</feature>
<feature type="strand" evidence="5">
    <location>
        <begin position="162"/>
        <end position="165"/>
    </location>
</feature>
<feature type="strand" evidence="5">
    <location>
        <begin position="167"/>
        <end position="173"/>
    </location>
</feature>
<feature type="helix" evidence="5">
    <location>
        <begin position="175"/>
        <end position="177"/>
    </location>
</feature>
<feature type="turn" evidence="5">
    <location>
        <begin position="178"/>
        <end position="180"/>
    </location>
</feature>
<feature type="strand" evidence="5">
    <location>
        <begin position="181"/>
        <end position="187"/>
    </location>
</feature>
<feature type="strand" evidence="5">
    <location>
        <begin position="200"/>
        <end position="203"/>
    </location>
</feature>